<proteinExistence type="inferred from homology"/>
<evidence type="ECO:0000255" key="1">
    <source>
        <dbReference type="HAMAP-Rule" id="MF_01904"/>
    </source>
</evidence>
<name>CAPPA_SACI7</name>
<feature type="chain" id="PRO_1000216176" description="Phosphoenolpyruvate carboxylase">
    <location>
        <begin position="1"/>
        <end position="511"/>
    </location>
</feature>
<keyword id="KW-0120">Carbon dioxide fixation</keyword>
<keyword id="KW-0456">Lyase</keyword>
<keyword id="KW-0460">Magnesium</keyword>
<dbReference type="EC" id="4.1.1.31" evidence="1"/>
<dbReference type="EMBL" id="CP001403">
    <property type="protein sequence ID" value="ACP44363.1"/>
    <property type="molecule type" value="Genomic_DNA"/>
</dbReference>
<dbReference type="RefSeq" id="WP_012715415.1">
    <property type="nucleotide sequence ID" value="NC_012622.1"/>
</dbReference>
<dbReference type="SMR" id="C3N8C3"/>
<dbReference type="GeneID" id="7805966"/>
<dbReference type="KEGG" id="siy:YG5714_0069"/>
<dbReference type="HOGENOM" id="CLU_517433_0_0_2"/>
<dbReference type="Proteomes" id="UP000002308">
    <property type="component" value="Chromosome"/>
</dbReference>
<dbReference type="GO" id="GO:0000287">
    <property type="term" value="F:magnesium ion binding"/>
    <property type="evidence" value="ECO:0007669"/>
    <property type="project" value="UniProtKB-UniRule"/>
</dbReference>
<dbReference type="GO" id="GO:0008964">
    <property type="term" value="F:phosphoenolpyruvate carboxylase activity"/>
    <property type="evidence" value="ECO:0007669"/>
    <property type="project" value="UniProtKB-UniRule"/>
</dbReference>
<dbReference type="GO" id="GO:0015977">
    <property type="term" value="P:carbon fixation"/>
    <property type="evidence" value="ECO:0007669"/>
    <property type="project" value="UniProtKB-UniRule"/>
</dbReference>
<dbReference type="GO" id="GO:0006107">
    <property type="term" value="P:oxaloacetate metabolic process"/>
    <property type="evidence" value="ECO:0007669"/>
    <property type="project" value="UniProtKB-UniRule"/>
</dbReference>
<dbReference type="GO" id="GO:0006099">
    <property type="term" value="P:tricarboxylic acid cycle"/>
    <property type="evidence" value="ECO:0007669"/>
    <property type="project" value="InterPro"/>
</dbReference>
<dbReference type="HAMAP" id="MF_01904">
    <property type="entry name" value="PEPcase_type2"/>
    <property type="match status" value="1"/>
</dbReference>
<dbReference type="InterPro" id="IPR007566">
    <property type="entry name" value="PEP_COase_arc-type"/>
</dbReference>
<dbReference type="InterPro" id="IPR015813">
    <property type="entry name" value="Pyrv/PenolPyrv_kinase-like_dom"/>
</dbReference>
<dbReference type="NCBIfam" id="TIGR02751">
    <property type="entry name" value="PEPCase_arch"/>
    <property type="match status" value="1"/>
</dbReference>
<dbReference type="Pfam" id="PF14010">
    <property type="entry name" value="PEPcase_2"/>
    <property type="match status" value="1"/>
</dbReference>
<dbReference type="PIRSF" id="PIRSF006677">
    <property type="entry name" value="UCP006677"/>
    <property type="match status" value="1"/>
</dbReference>
<dbReference type="SUPFAM" id="SSF51621">
    <property type="entry name" value="Phosphoenolpyruvate/pyruvate domain"/>
    <property type="match status" value="1"/>
</dbReference>
<organism>
    <name type="scientific">Saccharolobus islandicus (strain Y.G.57.14 / Yellowstone #1)</name>
    <name type="common">Sulfolobus islandicus</name>
    <dbReference type="NCBI Taxonomy" id="439386"/>
    <lineage>
        <taxon>Archaea</taxon>
        <taxon>Thermoproteota</taxon>
        <taxon>Thermoprotei</taxon>
        <taxon>Sulfolobales</taxon>
        <taxon>Sulfolobaceae</taxon>
        <taxon>Saccharolobus</taxon>
    </lineage>
</organism>
<sequence length="511" mass="58749">MRIIPRTMSTQHPDNAKVPEWAKSEVIEGEDEVKEAFLAYSMYGVHEVMWDAEGKDVDTHVVRKLLSNYPDYFREHILGKDVFLTYRLPNPKVEGADRKVFAETMESIPITYDLAEKFYGNGITVPVFEVILPMTTSNLEIISVARYYEKAVANEDELELYDGVKVKDLVGEIYPKVIEVIPLVEDRDSLQNIDNIVEGYYKVIKPKYMRVFLARSDPAMNYGMITAVLSVKIALSELYKLSESLNFEIYPIIGVGSLPFRGHLSPENYEKVLEEYKGVYTYTIQSAFKYDYDYDKVKSAISSINNSRIGPAKILEKYEEDVLRKITILYTERYQPIIESLANAINDVSVLLPRRRARKLHIGLFGYSRSAGKVSLPRAISFVGSLYSIGIPPELIGISSLSNLDEKEWDIFKQNYVNFKHDLQTAARFFNWESFELIKDIWKISEDTIAKIKEDIDYAESVIGIKLGGIDYDSRKHILMSSLFLLSFKEKILQESKKYLYEMALIRRSLG</sequence>
<reference key="1">
    <citation type="journal article" date="2009" name="Proc. Natl. Acad. Sci. U.S.A.">
        <title>Biogeography of the Sulfolobus islandicus pan-genome.</title>
        <authorList>
            <person name="Reno M.L."/>
            <person name="Held N.L."/>
            <person name="Fields C.J."/>
            <person name="Burke P.V."/>
            <person name="Whitaker R.J."/>
        </authorList>
    </citation>
    <scope>NUCLEOTIDE SEQUENCE [LARGE SCALE GENOMIC DNA]</scope>
    <source>
        <strain>Y.G.57.14 / Yellowstone #1</strain>
    </source>
</reference>
<comment type="function">
    <text evidence="1">Catalyzes the irreversible beta-carboxylation of phosphoenolpyruvate (PEP) to form oxaloacetate (OAA), a four-carbon dicarboxylic acid source for the tricarboxylic acid cycle.</text>
</comment>
<comment type="catalytic activity">
    <reaction evidence="1">
        <text>oxaloacetate + phosphate = phosphoenolpyruvate + hydrogencarbonate</text>
        <dbReference type="Rhea" id="RHEA:28370"/>
        <dbReference type="ChEBI" id="CHEBI:16452"/>
        <dbReference type="ChEBI" id="CHEBI:17544"/>
        <dbReference type="ChEBI" id="CHEBI:43474"/>
        <dbReference type="ChEBI" id="CHEBI:58702"/>
        <dbReference type="EC" id="4.1.1.31"/>
    </reaction>
</comment>
<comment type="cofactor">
    <cofactor evidence="1">
        <name>Mg(2+)</name>
        <dbReference type="ChEBI" id="CHEBI:18420"/>
    </cofactor>
</comment>
<comment type="subunit">
    <text evidence="1">Homotetramer.</text>
</comment>
<comment type="similarity">
    <text evidence="1">Belongs to the PEPCase type 2 family.</text>
</comment>
<accession>C3N8C3</accession>
<gene>
    <name evidence="1" type="primary">ppcA</name>
    <name type="ordered locus">YG5714_0069</name>
</gene>
<protein>
    <recommendedName>
        <fullName evidence="1">Phosphoenolpyruvate carboxylase</fullName>
        <shortName evidence="1">PEPC</shortName>
        <shortName evidence="1">PEPCase</shortName>
        <ecNumber evidence="1">4.1.1.31</ecNumber>
    </recommendedName>
</protein>